<keyword id="KW-0312">Gluconeogenesis</keyword>
<keyword id="KW-0324">Glycolysis</keyword>
<keyword id="KW-0413">Isomerase</keyword>
<keyword id="KW-1185">Reference proteome</keyword>
<evidence type="ECO:0000255" key="1">
    <source>
        <dbReference type="HAMAP-Rule" id="MF_01039"/>
    </source>
</evidence>
<sequence>MAVTKLVLVRHGESQWNKENRFTGWYDVDLSEKGVSEAKAAGKLLKEEGYSFDFAYTSVLKRAIHTLWNVLDELDQAWLPVEKSWKLNERHYGALQGLNKAETAEKYGDEQVKQWRRGFAVTPPELTKDDERYPGHDPRYAKLSEKELPLTESLALTIDRVIPYWNETILPRMKSGERVIIAAHGNSLRALVKYLDNMSEEGILELNIPTGVPLVYEFDENFKPLKRYYLGNADEIAAKAAAVANQGKAK</sequence>
<organism>
    <name type="scientific">Shigella dysenteriae serotype 1 (strain Sd197)</name>
    <dbReference type="NCBI Taxonomy" id="300267"/>
    <lineage>
        <taxon>Bacteria</taxon>
        <taxon>Pseudomonadati</taxon>
        <taxon>Pseudomonadota</taxon>
        <taxon>Gammaproteobacteria</taxon>
        <taxon>Enterobacterales</taxon>
        <taxon>Enterobacteriaceae</taxon>
        <taxon>Shigella</taxon>
    </lineage>
</organism>
<gene>
    <name evidence="1" type="primary">gpmA</name>
    <name type="ordered locus">SDY_0702</name>
</gene>
<feature type="chain" id="PRO_0000229141" description="2,3-bisphosphoglycerate-dependent phosphoglycerate mutase">
    <location>
        <begin position="1"/>
        <end position="250"/>
    </location>
</feature>
<feature type="active site" description="Tele-phosphohistidine intermediate" evidence="1">
    <location>
        <position position="11"/>
    </location>
</feature>
<feature type="active site" description="Proton donor/acceptor" evidence="1">
    <location>
        <position position="89"/>
    </location>
</feature>
<feature type="binding site" evidence="1">
    <location>
        <begin position="10"/>
        <end position="17"/>
    </location>
    <ligand>
        <name>substrate</name>
    </ligand>
</feature>
<feature type="binding site" evidence="1">
    <location>
        <begin position="23"/>
        <end position="24"/>
    </location>
    <ligand>
        <name>substrate</name>
    </ligand>
</feature>
<feature type="binding site" evidence="1">
    <location>
        <position position="62"/>
    </location>
    <ligand>
        <name>substrate</name>
    </ligand>
</feature>
<feature type="binding site" evidence="1">
    <location>
        <begin position="89"/>
        <end position="92"/>
    </location>
    <ligand>
        <name>substrate</name>
    </ligand>
</feature>
<feature type="binding site" evidence="1">
    <location>
        <position position="100"/>
    </location>
    <ligand>
        <name>substrate</name>
    </ligand>
</feature>
<feature type="binding site" evidence="1">
    <location>
        <begin position="116"/>
        <end position="117"/>
    </location>
    <ligand>
        <name>substrate</name>
    </ligand>
</feature>
<feature type="binding site" evidence="1">
    <location>
        <begin position="185"/>
        <end position="186"/>
    </location>
    <ligand>
        <name>substrate</name>
    </ligand>
</feature>
<feature type="site" description="Transition state stabilizer" evidence="1">
    <location>
        <position position="184"/>
    </location>
</feature>
<reference key="1">
    <citation type="journal article" date="2005" name="Nucleic Acids Res.">
        <title>Genome dynamics and diversity of Shigella species, the etiologic agents of bacillary dysentery.</title>
        <authorList>
            <person name="Yang F."/>
            <person name="Yang J."/>
            <person name="Zhang X."/>
            <person name="Chen L."/>
            <person name="Jiang Y."/>
            <person name="Yan Y."/>
            <person name="Tang X."/>
            <person name="Wang J."/>
            <person name="Xiong Z."/>
            <person name="Dong J."/>
            <person name="Xue Y."/>
            <person name="Zhu Y."/>
            <person name="Xu X."/>
            <person name="Sun L."/>
            <person name="Chen S."/>
            <person name="Nie H."/>
            <person name="Peng J."/>
            <person name="Xu J."/>
            <person name="Wang Y."/>
            <person name="Yuan Z."/>
            <person name="Wen Y."/>
            <person name="Yao Z."/>
            <person name="Shen Y."/>
            <person name="Qiang B."/>
            <person name="Hou Y."/>
            <person name="Yu J."/>
            <person name="Jin Q."/>
        </authorList>
    </citation>
    <scope>NUCLEOTIDE SEQUENCE [LARGE SCALE GENOMIC DNA]</scope>
    <source>
        <strain>Sd197</strain>
    </source>
</reference>
<name>GPMA_SHIDS</name>
<protein>
    <recommendedName>
        <fullName evidence="1">2,3-bisphosphoglycerate-dependent phosphoglycerate mutase</fullName>
        <shortName evidence="1">BPG-dependent PGAM</shortName>
        <shortName evidence="1">PGAM</shortName>
        <shortName evidence="1">Phosphoglyceromutase</shortName>
        <shortName evidence="1">dPGM</shortName>
        <ecNumber evidence="1">5.4.2.11</ecNumber>
    </recommendedName>
</protein>
<accession>Q32IH0</accession>
<comment type="function">
    <text evidence="1">Catalyzes the interconversion of 2-phosphoglycerate and 3-phosphoglycerate.</text>
</comment>
<comment type="catalytic activity">
    <reaction evidence="1">
        <text>(2R)-2-phosphoglycerate = (2R)-3-phosphoglycerate</text>
        <dbReference type="Rhea" id="RHEA:15901"/>
        <dbReference type="ChEBI" id="CHEBI:58272"/>
        <dbReference type="ChEBI" id="CHEBI:58289"/>
        <dbReference type="EC" id="5.4.2.11"/>
    </reaction>
</comment>
<comment type="pathway">
    <text evidence="1">Carbohydrate degradation; glycolysis; pyruvate from D-glyceraldehyde 3-phosphate: step 3/5.</text>
</comment>
<comment type="subunit">
    <text evidence="1">Homodimer.</text>
</comment>
<comment type="similarity">
    <text evidence="1">Belongs to the phosphoglycerate mutase family. BPG-dependent PGAM subfamily.</text>
</comment>
<dbReference type="EC" id="5.4.2.11" evidence="1"/>
<dbReference type="EMBL" id="CP000034">
    <property type="protein sequence ID" value="ABB60887.1"/>
    <property type="molecule type" value="Genomic_DNA"/>
</dbReference>
<dbReference type="RefSeq" id="WP_005019991.1">
    <property type="nucleotide sequence ID" value="NC_007606.1"/>
</dbReference>
<dbReference type="RefSeq" id="YP_402376.1">
    <property type="nucleotide sequence ID" value="NC_007606.1"/>
</dbReference>
<dbReference type="SMR" id="Q32IH0"/>
<dbReference type="STRING" id="300267.SDY_0702"/>
<dbReference type="EnsemblBacteria" id="ABB60887">
    <property type="protein sequence ID" value="ABB60887"/>
    <property type="gene ID" value="SDY_0702"/>
</dbReference>
<dbReference type="KEGG" id="sdy:SDY_0702"/>
<dbReference type="PATRIC" id="fig|300267.13.peg.813"/>
<dbReference type="HOGENOM" id="CLU_033323_1_1_6"/>
<dbReference type="UniPathway" id="UPA00109">
    <property type="reaction ID" value="UER00186"/>
</dbReference>
<dbReference type="Proteomes" id="UP000002716">
    <property type="component" value="Chromosome"/>
</dbReference>
<dbReference type="GO" id="GO:0004619">
    <property type="term" value="F:phosphoglycerate mutase activity"/>
    <property type="evidence" value="ECO:0007669"/>
    <property type="project" value="UniProtKB-EC"/>
</dbReference>
<dbReference type="GO" id="GO:0006094">
    <property type="term" value="P:gluconeogenesis"/>
    <property type="evidence" value="ECO:0007669"/>
    <property type="project" value="UniProtKB-UniRule"/>
</dbReference>
<dbReference type="GO" id="GO:0006096">
    <property type="term" value="P:glycolytic process"/>
    <property type="evidence" value="ECO:0007669"/>
    <property type="project" value="UniProtKB-UniRule"/>
</dbReference>
<dbReference type="CDD" id="cd07067">
    <property type="entry name" value="HP_PGM_like"/>
    <property type="match status" value="1"/>
</dbReference>
<dbReference type="FunFam" id="3.40.50.1240:FF:000003">
    <property type="entry name" value="2,3-bisphosphoglycerate-dependent phosphoglycerate mutase"/>
    <property type="match status" value="1"/>
</dbReference>
<dbReference type="Gene3D" id="3.40.50.1240">
    <property type="entry name" value="Phosphoglycerate mutase-like"/>
    <property type="match status" value="1"/>
</dbReference>
<dbReference type="HAMAP" id="MF_01039">
    <property type="entry name" value="PGAM_GpmA"/>
    <property type="match status" value="1"/>
</dbReference>
<dbReference type="InterPro" id="IPR013078">
    <property type="entry name" value="His_Pase_superF_clade-1"/>
</dbReference>
<dbReference type="InterPro" id="IPR029033">
    <property type="entry name" value="His_PPase_superfam"/>
</dbReference>
<dbReference type="InterPro" id="IPR001345">
    <property type="entry name" value="PG/BPGM_mutase_AS"/>
</dbReference>
<dbReference type="InterPro" id="IPR005952">
    <property type="entry name" value="Phosphogly_mut1"/>
</dbReference>
<dbReference type="NCBIfam" id="TIGR01258">
    <property type="entry name" value="pgm_1"/>
    <property type="match status" value="1"/>
</dbReference>
<dbReference type="NCBIfam" id="NF010713">
    <property type="entry name" value="PRK14115.1"/>
    <property type="match status" value="1"/>
</dbReference>
<dbReference type="PANTHER" id="PTHR11931">
    <property type="entry name" value="PHOSPHOGLYCERATE MUTASE"/>
    <property type="match status" value="1"/>
</dbReference>
<dbReference type="Pfam" id="PF00300">
    <property type="entry name" value="His_Phos_1"/>
    <property type="match status" value="1"/>
</dbReference>
<dbReference type="PIRSF" id="PIRSF000709">
    <property type="entry name" value="6PFK_2-Ptase"/>
    <property type="match status" value="1"/>
</dbReference>
<dbReference type="SMART" id="SM00855">
    <property type="entry name" value="PGAM"/>
    <property type="match status" value="1"/>
</dbReference>
<dbReference type="SUPFAM" id="SSF53254">
    <property type="entry name" value="Phosphoglycerate mutase-like"/>
    <property type="match status" value="1"/>
</dbReference>
<dbReference type="PROSITE" id="PS00175">
    <property type="entry name" value="PG_MUTASE"/>
    <property type="match status" value="1"/>
</dbReference>
<proteinExistence type="inferred from homology"/>